<accession>Q9UBY8</accession>
<accession>Q86U71</accession>
<accession>Q96I95</accession>
<organism>
    <name type="scientific">Homo sapiens</name>
    <name type="common">Human</name>
    <dbReference type="NCBI Taxonomy" id="9606"/>
    <lineage>
        <taxon>Eukaryota</taxon>
        <taxon>Metazoa</taxon>
        <taxon>Chordata</taxon>
        <taxon>Craniata</taxon>
        <taxon>Vertebrata</taxon>
        <taxon>Euteleostomi</taxon>
        <taxon>Mammalia</taxon>
        <taxon>Eutheria</taxon>
        <taxon>Euarchontoglires</taxon>
        <taxon>Primates</taxon>
        <taxon>Haplorrhini</taxon>
        <taxon>Catarrhini</taxon>
        <taxon>Hominidae</taxon>
        <taxon>Homo</taxon>
    </lineage>
</organism>
<gene>
    <name type="primary">CLN8</name>
    <name type="synonym">C8orf61</name>
</gene>
<reference key="1">
    <citation type="journal article" date="1999" name="Nat. Genet.">
        <title>The neuronal ceroid lipofuscinoses in human EPMR and mnd mutant mice are associated with mutations in CLN8.</title>
        <authorList>
            <person name="Ranta S."/>
            <person name="Zhang Y."/>
            <person name="Ross B."/>
            <person name="Lonka L."/>
            <person name="Takkunen E."/>
            <person name="Messer A."/>
            <person name="Sharp J."/>
            <person name="Wheeler R."/>
            <person name="Kusumi K."/>
            <person name="Mole S."/>
            <person name="Liu W."/>
            <person name="Soares M.B."/>
            <person name="Bonaldo M.F."/>
            <person name="Hirvasniemi A."/>
            <person name="de la Chapelle A."/>
            <person name="Gilliam T.C."/>
            <person name="Lehesjoki A.-E."/>
        </authorList>
    </citation>
    <scope>NUCLEOTIDE SEQUENCE [MRNA]</scope>
    <scope>VARIANT CLN8NE GLY-24</scope>
    <scope>VARIANT VAL-155</scope>
</reference>
<reference key="2">
    <citation type="submission" date="2003-05" db="EMBL/GenBank/DDBJ databases">
        <title>Cloning of human full-length CDSs in BD Creator(TM) system donor vector.</title>
        <authorList>
            <person name="Kalnine N."/>
            <person name="Chen X."/>
            <person name="Rolfs A."/>
            <person name="Halleck A."/>
            <person name="Hines L."/>
            <person name="Eisenstein S."/>
            <person name="Koundinya M."/>
            <person name="Raphael J."/>
            <person name="Moreira D."/>
            <person name="Kelley T."/>
            <person name="LaBaer J."/>
            <person name="Lin Y."/>
            <person name="Phelan M."/>
            <person name="Farmer A."/>
        </authorList>
    </citation>
    <scope>NUCLEOTIDE SEQUENCE [LARGE SCALE MRNA]</scope>
</reference>
<reference key="3">
    <citation type="journal article" date="2004" name="Genome Res.">
        <title>The status, quality, and expansion of the NIH full-length cDNA project: the Mammalian Gene Collection (MGC).</title>
        <authorList>
            <consortium name="The MGC Project Team"/>
        </authorList>
    </citation>
    <scope>NUCLEOTIDE SEQUENCE [LARGE SCALE MRNA]</scope>
    <source>
        <tissue>Uterus</tissue>
    </source>
</reference>
<reference key="4">
    <citation type="journal article" date="2000" name="Hum. Mol. Genet.">
        <title>The neuronal ceroid lipofuscinosis CLN8 membrane protein is a resident of the endoplasmic reticulum.</title>
        <authorList>
            <person name="Lonka L."/>
            <person name="Kyttaelae A."/>
            <person name="Ranta S."/>
            <person name="Jalanko A."/>
            <person name="Lehesjoki A.-E."/>
        </authorList>
    </citation>
    <scope>SUBCELLULAR LOCATION</scope>
    <scope>MUTAGENESIS OF 283-LYS-LYS-284</scope>
</reference>
<reference key="5">
    <citation type="journal article" date="2007" name="Pediatr. Res.">
        <title>Neuronal ceroid lipofuscinosis: a common pathway?</title>
        <authorList>
            <person name="Persaud-Sawin D.A."/>
            <person name="Mousallem T."/>
            <person name="Wang C."/>
            <person name="Zucker A."/>
            <person name="Kominami E."/>
            <person name="Boustany R.M."/>
        </authorList>
    </citation>
    <scope>INTERACTION WITH CLN3</scope>
</reference>
<reference key="6">
    <citation type="journal article" date="2009" name="BMC Cell Biol.">
        <title>Novel interactions of CLN5 support molecular networking between neuronal ceroid lipofuscinosis proteins.</title>
        <authorList>
            <person name="Lyly A."/>
            <person name="von Schantz C."/>
            <person name="Heine C."/>
            <person name="Schmiedt M.L."/>
            <person name="Sipilae T."/>
            <person name="Jalanko A."/>
            <person name="Kyttaelae A."/>
        </authorList>
    </citation>
    <scope>SUBCELLULAR LOCATION</scope>
</reference>
<reference key="7">
    <citation type="journal article" date="2004" name="Hum. Mutat.">
        <title>Variant late infantile neuronal ceroid lipofuscinosis in a subset of Turkish patients is allelic to Northern epilepsy.</title>
        <authorList>
            <person name="Ranta S."/>
            <person name="Topcu M."/>
            <person name="Tegelberg S."/>
            <person name="Tan H."/>
            <person name="Uestuebuetuen A."/>
            <person name="Saatci I."/>
            <person name="Dufke A."/>
            <person name="Enders H."/>
            <person name="Pohl K."/>
            <person name="Alembik Y."/>
            <person name="Mitchell W.A."/>
            <person name="Mole S.E."/>
            <person name="Lehesjoki A.-E."/>
        </authorList>
    </citation>
    <scope>VARIANTS CLN8 MET-16; MET-170; CYS-204 AND CYS-263</scope>
</reference>
<reference key="8">
    <citation type="journal article" date="2006" name="Neurogenetics">
        <title>Novel mutations in CLN8 in Italian variant late infantile neuronal ceroid lipofuscinosis: Another genetic hit in the Mediterranean.</title>
        <authorList>
            <person name="Cannelli N."/>
            <person name="Cassandrini D."/>
            <person name="Bertini E."/>
            <person name="Striano P."/>
            <person name="Fusco L."/>
            <person name="Gaggero R."/>
            <person name="Specchio N."/>
            <person name="Biancheri R."/>
            <person name="Vigevano F."/>
            <person name="Bruno C."/>
            <person name="Simonati A."/>
            <person name="Zara F."/>
            <person name="Santorelli F.M."/>
        </authorList>
    </citation>
    <scope>VARIANTS CLN8 PRO-30; CYS-158 AND ARG-194</scope>
</reference>
<reference key="9">
    <citation type="journal article" date="2009" name="Brain">
        <title>Mutations in CLN7/MFSD8 are a common cause of variant late-infantile neuronal ceroid lipofuscinosis.</title>
        <authorList>
            <person name="Kousi M."/>
            <person name="Siintola E."/>
            <person name="Dvorakova L."/>
            <person name="Vlaskova H."/>
            <person name="Turnbull J."/>
            <person name="Topcu M."/>
            <person name="Yuksel D."/>
            <person name="Gokben S."/>
            <person name="Minassian B.A."/>
            <person name="Elleder M."/>
            <person name="Mole S.E."/>
            <person name="Lehesjoki A.-E."/>
        </authorList>
    </citation>
    <scope>VARIANTS CLN8 CYS-158 AND ARG-237</scope>
</reference>
<reference key="10">
    <citation type="journal article" date="2009" name="Hum. Mutat.">
        <title>A novel CLN8 mutation in late-infantile-onset neuronal ceroid lipofuscinosis (LINCL) reveals aspects of CLN8 neurobiological function.</title>
        <authorList>
            <person name="Vantaggiato C."/>
            <person name="Redaelli F."/>
            <person name="Falcone S."/>
            <person name="Perrotta C."/>
            <person name="Tonelli A."/>
            <person name="Bondioni S."/>
            <person name="Morbin M."/>
            <person name="Riva D."/>
            <person name="Saletti V."/>
            <person name="Bonaglia M.C."/>
            <person name="Giorda R."/>
            <person name="Bresolin N."/>
            <person name="Clementi E."/>
            <person name="Bassi M.T."/>
        </authorList>
    </citation>
    <scope>VARIANT CLN8 LYS-61 DEL</scope>
    <scope>FUNCTION</scope>
</reference>
<reference key="11">
    <citation type="journal article" date="2010" name="Clin. Genet.">
        <title>Novel CLN8 mutations confirm the clinical and ethnic diversity of late infantile neuronal ceroid lipofuscinosis.</title>
        <authorList>
            <person name="Reinhardt K."/>
            <person name="Grapp M."/>
            <person name="Schlachter K."/>
            <person name="Brueck W."/>
            <person name="Gaertner J."/>
            <person name="Steinfeld R."/>
        </authorList>
    </citation>
    <scope>VARIANTS CLN8 LEU-204 AND ARG-237</scope>
</reference>
<reference key="12">
    <citation type="journal article" date="2012" name="Hum. Mutat.">
        <title>Update of the mutation spectrum and clinical correlations of over 360 mutations in eight genes that underlie the neuronal ceroid lipofuscinoses.</title>
        <authorList>
            <person name="Kousi M."/>
            <person name="Lehesjoki A.E."/>
            <person name="Mole S.E."/>
        </authorList>
    </citation>
    <scope>VARIANTS CLN8 HIS-70; ARG-76; SER-107; TYR-139; TRP-213 DEL; SER-221; ARG-237 AND VAL-269</scope>
    <scope>VARIANT CLN8NE GLY-24</scope>
    <scope>VARIANTS SER-125 AND ALA-229</scope>
</reference>
<reference key="13">
    <citation type="journal article" date="2016" name="Brain Dev.">
        <title>Novel missense mutation in CLN8 in late infantile neuronal ceroid lipofuscinosis: The first report of a CLN8 mutation in Japan.</title>
        <authorList>
            <person name="Katata Y."/>
            <person name="Uematsu M."/>
            <person name="Sato H."/>
            <person name="Suzuki S."/>
            <person name="Nakayama T."/>
            <person name="Kubota Y."/>
            <person name="Kobayashi T."/>
            <person name="Hino-Fukuyo N."/>
            <person name="Saitsu H."/>
            <person name="Kure S."/>
        </authorList>
    </citation>
    <scope>VARIANT CLN8 ARG-207</scope>
</reference>
<reference key="14">
    <citation type="journal article" date="2016" name="Nature">
        <title>Analysis of protein-coding genetic variation in 60,706 humans.</title>
        <authorList>
            <consortium name="Exome Aggregation Consortium"/>
            <person name="Lek M."/>
            <person name="Karczewski K.J."/>
            <person name="Minikel E.V."/>
            <person name="Samocha K.E."/>
            <person name="Banks E."/>
            <person name="Fennell T."/>
            <person name="O'Donnell-Luria A.H."/>
            <person name="Ware J.S."/>
            <person name="Hill A.J."/>
            <person name="Cummings B.B."/>
            <person name="Tukiainen T."/>
            <person name="Birnbaum D.P."/>
            <person name="Kosmicki J.A."/>
            <person name="Duncan L.E."/>
            <person name="Estrada K."/>
            <person name="Zhao F."/>
            <person name="Zou J."/>
            <person name="Pierce-Hoffman E."/>
            <person name="Berghout J."/>
            <person name="Cooper D.N."/>
            <person name="Deflaux N."/>
            <person name="DePristo M."/>
            <person name="Do R."/>
            <person name="Flannick J."/>
            <person name="Fromer M."/>
            <person name="Gauthier L."/>
            <person name="Goldstein J."/>
            <person name="Gupta N."/>
            <person name="Howrigan D."/>
            <person name="Kiezun A."/>
            <person name="Kurki M.I."/>
            <person name="Moonshine A.L."/>
            <person name="Natarajan P."/>
            <person name="Orozco L."/>
            <person name="Peloso G.M."/>
            <person name="Poplin R."/>
            <person name="Rivas M.A."/>
            <person name="Ruano-Rubio V."/>
            <person name="Rose S.A."/>
            <person name="Ruderfer D.M."/>
            <person name="Shakir K."/>
            <person name="Stenson P.D."/>
            <person name="Stevens C."/>
            <person name="Thomas B.P."/>
            <person name="Tiao G."/>
            <person name="Tusie-Luna M.T."/>
            <person name="Weisburd B."/>
            <person name="Won H.H."/>
            <person name="Yu D."/>
            <person name="Altshuler D.M."/>
            <person name="Ardissino D."/>
            <person name="Boehnke M."/>
            <person name="Danesh J."/>
            <person name="Donnelly S."/>
            <person name="Elosua R."/>
            <person name="Florez J.C."/>
            <person name="Gabriel S.B."/>
            <person name="Getz G."/>
            <person name="Glatt S.J."/>
            <person name="Hultman C.M."/>
            <person name="Kathiresan S."/>
            <person name="Laakso M."/>
            <person name="McCarroll S."/>
            <person name="McCarthy M.I."/>
            <person name="McGovern D."/>
            <person name="McPherson R."/>
            <person name="Neale B.M."/>
            <person name="Palotie A."/>
            <person name="Purcell S.M."/>
            <person name="Saleheen D."/>
            <person name="Scharf J.M."/>
            <person name="Sklar P."/>
            <person name="Sullivan P.F."/>
            <person name="Tuomilehto J."/>
            <person name="Tsuang M.T."/>
            <person name="Watkins H.C."/>
            <person name="Wilson J.G."/>
            <person name="Daly M.J."/>
            <person name="MacArthur D.G."/>
        </authorList>
    </citation>
    <scope>VARIANT ALA-229</scope>
</reference>
<feature type="chain" id="PRO_0000185537" description="Protein CLN8">
    <location>
        <begin position="1"/>
        <end position="286"/>
    </location>
</feature>
<feature type="transmembrane region" description="Helical" evidence="2">
    <location>
        <begin position="21"/>
        <end position="41"/>
    </location>
</feature>
<feature type="transmembrane region" description="Helical" evidence="2">
    <location>
        <begin position="62"/>
        <end position="84"/>
    </location>
</feature>
<feature type="transmembrane region" description="Helical" evidence="2">
    <location>
        <begin position="103"/>
        <end position="123"/>
    </location>
</feature>
<feature type="transmembrane region" description="Helical" evidence="2">
    <location>
        <begin position="131"/>
        <end position="151"/>
    </location>
</feature>
<feature type="transmembrane region" description="Helical" evidence="2">
    <location>
        <begin position="226"/>
        <end position="246"/>
    </location>
</feature>
<feature type="domain" description="TLC" evidence="3">
    <location>
        <begin position="62"/>
        <end position="262"/>
    </location>
</feature>
<feature type="short sequence motif" description="ER-retrieval signal">
    <location>
        <begin position="283"/>
        <end position="286"/>
    </location>
</feature>
<feature type="sequence variant" id="VAR_026554" description="In CLN8; associated with M-170 on the same allele; dbSNP:rs386834129." evidence="6">
    <original>L</original>
    <variation>M</variation>
    <location>
        <position position="16"/>
    </location>
</feature>
<feature type="sequence variant" id="VAR_013174" description="In CLN8NE; dbSNP:rs104894064." evidence="4 13">
    <original>R</original>
    <variation>G</variation>
    <location>
        <position position="24"/>
    </location>
</feature>
<feature type="sequence variant" id="VAR_060573" description="In CLN8; dbSNP:rs137852883." evidence="7">
    <original>A</original>
    <variation>P</variation>
    <location>
        <position position="30"/>
    </location>
</feature>
<feature type="sequence variant" id="VAR_060574" description="In CLN8." evidence="10">
    <location>
        <position position="61"/>
    </location>
</feature>
<feature type="sequence variant" id="VAR_066920" description="In CLN8; dbSNP:rs386834124." evidence="13">
    <original>R</original>
    <variation>H</variation>
    <location>
        <position position="70"/>
    </location>
</feature>
<feature type="sequence variant" id="VAR_066921" description="In CLN8; dbSNP:rs386834125." evidence="13">
    <original>Q</original>
    <variation>R</variation>
    <location>
        <position position="76"/>
    </location>
</feature>
<feature type="sequence variant" id="VAR_031704" description="In dbSNP:rs34030778.">
    <original>H</original>
    <variation>Y</variation>
    <location>
        <position position="92"/>
    </location>
</feature>
<feature type="sequence variant" id="VAR_066922" description="In CLN8; dbSNP:rs386834126." evidence="13">
    <original>I</original>
    <variation>S</variation>
    <location>
        <position position="107"/>
    </location>
</feature>
<feature type="sequence variant" id="VAR_066923" description="In dbSNP:rs142269885." evidence="13">
    <original>N</original>
    <variation>S</variation>
    <location>
        <position position="125"/>
    </location>
</feature>
<feature type="sequence variant" id="VAR_066924" description="In CLN8; dbSNP:rs386834127." evidence="13">
    <original>H</original>
    <variation>Y</variation>
    <location>
        <position position="139"/>
    </location>
</feature>
<feature type="sequence variant" id="VAR_013175" description="In dbSNP:rs386834128." evidence="4">
    <original>A</original>
    <variation>V</variation>
    <location>
        <position position="155"/>
    </location>
</feature>
<feature type="sequence variant" id="VAR_058438" description="In CLN8; dbSNP:rs386834130." evidence="7 9">
    <original>Y</original>
    <variation>C</variation>
    <location>
        <position position="158"/>
    </location>
</feature>
<feature type="sequence variant" id="VAR_026555" description="In CLN8; associated with M-16 on the same allele; dbSNP:rs188259026." evidence="6">
    <original>T</original>
    <variation>M</variation>
    <location>
        <position position="170"/>
    </location>
</feature>
<feature type="sequence variant" id="VAR_060575" description="In CLN8; dbSNP:rs386834133." evidence="7">
    <original>Q</original>
    <variation>R</variation>
    <location>
        <position position="194"/>
    </location>
</feature>
<feature type="sequence variant" id="VAR_026556" description="In CLN8; dbSNP:rs104894060." evidence="6">
    <original>R</original>
    <variation>C</variation>
    <location>
        <position position="204"/>
    </location>
</feature>
<feature type="sequence variant" id="VAR_075367" description="In CLN8; dbSNP:rs386834134." evidence="11">
    <original>R</original>
    <variation>L</variation>
    <location>
        <position position="204"/>
    </location>
</feature>
<feature type="sequence variant" id="VAR_075368" description="In CLN8; uncertain significance; dbSNP:rs781166361." evidence="14">
    <original>L</original>
    <variation>R</variation>
    <location>
        <position position="207"/>
    </location>
</feature>
<feature type="sequence variant" id="VAR_066925" description="In CLN8." evidence="13">
    <location>
        <position position="213"/>
    </location>
</feature>
<feature type="sequence variant" id="VAR_066926" description="In CLN8; dbSNP:rs386834136." evidence="13">
    <original>G</original>
    <variation>S</variation>
    <location>
        <position position="221"/>
    </location>
</feature>
<feature type="sequence variant" id="VAR_066927" description="In dbSNP:rs150047904." evidence="13 15">
    <original>P</original>
    <variation>A</variation>
    <location>
        <position position="229"/>
    </location>
</feature>
<feature type="sequence variant" id="VAR_058439" description="In CLN8; dbSNP:rs746645358." evidence="9 11 13">
    <original>G</original>
    <variation>R</variation>
    <location>
        <position position="237"/>
    </location>
</feature>
<feature type="sequence variant" id="VAR_026557" description="In CLN8; dbSNP:rs28940569." evidence="6">
    <original>W</original>
    <variation>C</variation>
    <location>
        <position position="263"/>
    </location>
</feature>
<feature type="sequence variant" id="VAR_066928" description="In CLN8; dbSNP:rs139003032." evidence="13">
    <original>E</original>
    <variation>V</variation>
    <location>
        <position position="269"/>
    </location>
</feature>
<feature type="mutagenesis site" description="Localizes to the Golgi complex." evidence="5">
    <original>KK</original>
    <variation>RR</variation>
    <location>
        <begin position="283"/>
        <end position="284"/>
    </location>
</feature>
<feature type="sequence conflict" description="In Ref. 1; AAF13115." evidence="16" ref="1">
    <original>S</original>
    <variation>N</variation>
    <location>
        <position position="225"/>
    </location>
</feature>
<keyword id="KW-0225">Disease variant</keyword>
<keyword id="KW-0256">Endoplasmic reticulum</keyword>
<keyword id="KW-0887">Epilepsy</keyword>
<keyword id="KW-0991">Intellectual disability</keyword>
<keyword id="KW-0472">Membrane</keyword>
<keyword id="KW-0523">Neurodegeneration</keyword>
<keyword id="KW-0525">Neuronal ceroid lipofuscinosis</keyword>
<keyword id="KW-1267">Proteomics identification</keyword>
<keyword id="KW-1185">Reference proteome</keyword>
<keyword id="KW-0812">Transmembrane</keyword>
<keyword id="KW-1133">Transmembrane helix</keyword>
<evidence type="ECO:0000250" key="1">
    <source>
        <dbReference type="UniProtKB" id="Q9QUK3"/>
    </source>
</evidence>
<evidence type="ECO:0000255" key="2"/>
<evidence type="ECO:0000255" key="3">
    <source>
        <dbReference type="PROSITE-ProRule" id="PRU00205"/>
    </source>
</evidence>
<evidence type="ECO:0000269" key="4">
    <source>
    </source>
</evidence>
<evidence type="ECO:0000269" key="5">
    <source>
    </source>
</evidence>
<evidence type="ECO:0000269" key="6">
    <source>
    </source>
</evidence>
<evidence type="ECO:0000269" key="7">
    <source>
    </source>
</evidence>
<evidence type="ECO:0000269" key="8">
    <source>
    </source>
</evidence>
<evidence type="ECO:0000269" key="9">
    <source>
    </source>
</evidence>
<evidence type="ECO:0000269" key="10">
    <source>
    </source>
</evidence>
<evidence type="ECO:0000269" key="11">
    <source>
    </source>
</evidence>
<evidence type="ECO:0000269" key="12">
    <source>
    </source>
</evidence>
<evidence type="ECO:0000269" key="13">
    <source>
    </source>
</evidence>
<evidence type="ECO:0000269" key="14">
    <source>
    </source>
</evidence>
<evidence type="ECO:0000269" key="15">
    <source>
    </source>
</evidence>
<evidence type="ECO:0000305" key="16"/>
<sequence length="286" mass="32787">MNPASDGGTSESIFDLDYASWGIRSTLMVAGFVFYLGVFVVCHQLSSSLNATYRSLVAREKVFWDLAATRAVFGVQSTAAGLWALLGDPVLHADKARGQQNWCWFHITTATGFFCFENVAVHLSNLIFRTFDLFLVIHHLFAFLGFLGCLVNLQAGHYLAMTTLLLEMSTPFTCVSWMLLKAGWSESLFWKLNQWLMIHMFHCRMVLTYHMWWVCFWHWDGLVSSLYLPHLTLFLVGLALLTLIINPYWTHKKTQQLLNPVDWNFAQPEAKSRPEGNGQLLRKKRP</sequence>
<comment type="function">
    <text evidence="10">Could play a role in cell proliferation during neuronal differentiation and in protection against cell death.</text>
</comment>
<comment type="subunit">
    <text evidence="1 8">Interacts with CLN5 (By similarity). Interacts with CLN3 (PubMed:17237713).</text>
</comment>
<comment type="subcellular location">
    <subcellularLocation>
        <location evidence="5">Endoplasmic reticulum membrane</location>
        <topology evidence="5">Multi-pass membrane protein</topology>
    </subcellularLocation>
    <subcellularLocation>
        <location evidence="5">Endoplasmic reticulum-Golgi intermediate compartment membrane</location>
        <topology evidence="5">Multi-pass membrane protein</topology>
    </subcellularLocation>
    <subcellularLocation>
        <location evidence="12">Endoplasmic reticulum</location>
    </subcellularLocation>
</comment>
<comment type="PTM">
    <text>Does not seem to be N-glycosylated.</text>
</comment>
<comment type="disease" evidence="6 7 9 10 11 13 14">
    <disease id="DI-00816">
        <name>Ceroid lipofuscinosis, neuronal, 8</name>
        <acronym>CLN8</acronym>
        <description>A form of neuronal ceroid lipofuscinosis with onset in childhood. Neuronal ceroid lipofuscinoses are progressive neurodegenerative, lysosomal storage diseases characterized by intracellular accumulation of autofluorescent liposomal material, and clinically by seizures, dementia, visual loss, and/or cerebral atrophy. The lipopigment patterns observed most often in neuronal ceroid lipofuscinosis type 8 comprise mixed combinations of granular, curvilinear, and fingerprint profiles.</description>
        <dbReference type="MIM" id="600143"/>
    </disease>
    <text>The disease is caused by variants affecting the gene represented in this entry.</text>
</comment>
<comment type="disease" evidence="4 13">
    <disease id="DI-00817">
        <name>Ceroid lipofuscinosis, neuronal, 8, Northern epilepsy variant</name>
        <acronym>CLN8NE</acronym>
        <description>A form of neuronal ceroid lipofuscinosis clinically characterized by epilepsy that presents between 5 and 10 years of age with frequent tonic-clonic seizures followed by progressive intellectual disability. Visual loss is not a prominent feature. Intracellular accumulation of autofluorescent material results in curvilinear and granular profiles on ultrastructural analysis.</description>
        <dbReference type="MIM" id="610003"/>
    </disease>
    <text>The disease is caused by variants affecting the gene represented in this entry.</text>
</comment>
<comment type="online information" name="NCL CLN8">
    <link uri="https://www.ucl.ac.uk/ncl-disease/ncl-resource-gateway-batten-disease"/>
    <text>Neural Ceroid Lipofuscinoses mutation db</text>
</comment>
<dbReference type="EMBL" id="AF123757">
    <property type="protein sequence ID" value="AAF13115.1"/>
    <property type="molecule type" value="mRNA"/>
</dbReference>
<dbReference type="EMBL" id="AF123758">
    <property type="protein sequence ID" value="AAF13116.1"/>
    <property type="molecule type" value="mRNA"/>
</dbReference>
<dbReference type="EMBL" id="AF123759">
    <property type="protein sequence ID" value="AAF13117.1"/>
    <property type="molecule type" value="mRNA"/>
</dbReference>
<dbReference type="EMBL" id="AF123760">
    <property type="protein sequence ID" value="AAF13118.1"/>
    <property type="molecule type" value="mRNA"/>
</dbReference>
<dbReference type="EMBL" id="AF123761">
    <property type="protein sequence ID" value="AAF13119.1"/>
    <property type="molecule type" value="mRNA"/>
</dbReference>
<dbReference type="EMBL" id="BT007049">
    <property type="protein sequence ID" value="AAP35698.1"/>
    <property type="molecule type" value="mRNA"/>
</dbReference>
<dbReference type="EMBL" id="BC007725">
    <property type="protein sequence ID" value="AAH07725.1"/>
    <property type="molecule type" value="mRNA"/>
</dbReference>
<dbReference type="CCDS" id="CCDS5956.1"/>
<dbReference type="RefSeq" id="NP_061764.2">
    <property type="nucleotide sequence ID" value="NM_018941.3"/>
</dbReference>
<dbReference type="RefSeq" id="XP_005266078.1">
    <property type="nucleotide sequence ID" value="XM_005266021.5"/>
</dbReference>
<dbReference type="RefSeq" id="XP_005266079.1">
    <property type="nucleotide sequence ID" value="XM_005266022.2"/>
</dbReference>
<dbReference type="RefSeq" id="XP_005266080.1">
    <property type="nucleotide sequence ID" value="XM_005266023.2"/>
</dbReference>
<dbReference type="RefSeq" id="XP_011533047.1">
    <property type="nucleotide sequence ID" value="XM_011534745.2"/>
</dbReference>
<dbReference type="RefSeq" id="XP_011533048.1">
    <property type="nucleotide sequence ID" value="XM_011534746.3"/>
</dbReference>
<dbReference type="RefSeq" id="XP_047277468.1">
    <property type="nucleotide sequence ID" value="XM_047421512.1"/>
</dbReference>
<dbReference type="RefSeq" id="XP_054186415.1">
    <property type="nucleotide sequence ID" value="XM_054330440.1"/>
</dbReference>
<dbReference type="RefSeq" id="XP_054186416.1">
    <property type="nucleotide sequence ID" value="XM_054330441.1"/>
</dbReference>
<dbReference type="RefSeq" id="XP_054186417.1">
    <property type="nucleotide sequence ID" value="XM_054330442.1"/>
</dbReference>
<dbReference type="RefSeq" id="XP_054186418.1">
    <property type="nucleotide sequence ID" value="XM_054330443.1"/>
</dbReference>
<dbReference type="RefSeq" id="XP_054186419.1">
    <property type="nucleotide sequence ID" value="XM_054330444.1"/>
</dbReference>
<dbReference type="RefSeq" id="XP_054186420.1">
    <property type="nucleotide sequence ID" value="XM_054330445.1"/>
</dbReference>
<dbReference type="BioGRID" id="108369">
    <property type="interactions" value="42"/>
</dbReference>
<dbReference type="FunCoup" id="Q9UBY8">
    <property type="interactions" value="523"/>
</dbReference>
<dbReference type="IntAct" id="Q9UBY8">
    <property type="interactions" value="1"/>
</dbReference>
<dbReference type="MINT" id="Q9UBY8"/>
<dbReference type="STRING" id="9606.ENSP00000328182"/>
<dbReference type="PhosphoSitePlus" id="Q9UBY8"/>
<dbReference type="SwissPalm" id="Q9UBY8"/>
<dbReference type="BioMuta" id="CLN8"/>
<dbReference type="DMDM" id="145559455"/>
<dbReference type="jPOST" id="Q9UBY8"/>
<dbReference type="MassIVE" id="Q9UBY8"/>
<dbReference type="PaxDb" id="9606-ENSP00000328182"/>
<dbReference type="PeptideAtlas" id="Q9UBY8"/>
<dbReference type="ProteomicsDB" id="84100"/>
<dbReference type="Antibodypedia" id="21957">
    <property type="antibodies" value="139 antibodies from 24 providers"/>
</dbReference>
<dbReference type="DNASU" id="2055"/>
<dbReference type="Ensembl" id="ENST00000331222.6">
    <property type="protein sequence ID" value="ENSP00000328182.4"/>
    <property type="gene ID" value="ENSG00000182372.10"/>
</dbReference>
<dbReference type="Ensembl" id="ENST00000519254.2">
    <property type="protein sequence ID" value="ENSP00000490016.1"/>
    <property type="gene ID" value="ENSG00000182372.10"/>
</dbReference>
<dbReference type="Ensembl" id="ENST00000619400.2">
    <property type="protein sequence ID" value="ENSP00000482713.1"/>
    <property type="gene ID" value="ENSG00000278220.2"/>
</dbReference>
<dbReference type="Ensembl" id="ENST00000635751.1">
    <property type="protein sequence ID" value="ENSP00000489694.1"/>
    <property type="gene ID" value="ENSG00000182372.10"/>
</dbReference>
<dbReference type="Ensembl" id="ENST00000635970.1">
    <property type="protein sequence ID" value="ENSP00000490439.1"/>
    <property type="gene ID" value="ENSG00000182372.10"/>
</dbReference>
<dbReference type="Ensembl" id="ENST00000637083.1">
    <property type="protein sequence ID" value="ENSP00000490235.1"/>
    <property type="gene ID" value="ENSG00000182372.10"/>
</dbReference>
<dbReference type="Ensembl" id="ENST00000637156.1">
    <property type="protein sequence ID" value="ENSP00000490458.1"/>
    <property type="gene ID" value="ENSG00000182372.10"/>
</dbReference>
<dbReference type="GeneID" id="2055"/>
<dbReference type="KEGG" id="hsa:2055"/>
<dbReference type="MANE-Select" id="ENST00000331222.6">
    <property type="protein sequence ID" value="ENSP00000328182.4"/>
    <property type="RefSeq nucleotide sequence ID" value="NM_018941.4"/>
    <property type="RefSeq protein sequence ID" value="NP_061764.2"/>
</dbReference>
<dbReference type="UCSC" id="uc003wpo.5">
    <property type="organism name" value="human"/>
</dbReference>
<dbReference type="AGR" id="HGNC:2079"/>
<dbReference type="CTD" id="2055"/>
<dbReference type="DisGeNET" id="2055"/>
<dbReference type="GeneCards" id="CLN8"/>
<dbReference type="HGNC" id="HGNC:2079">
    <property type="gene designation" value="CLN8"/>
</dbReference>
<dbReference type="HPA" id="ENSG00000182372">
    <property type="expression patterns" value="Low tissue specificity"/>
</dbReference>
<dbReference type="MalaCards" id="CLN8"/>
<dbReference type="MIM" id="600143">
    <property type="type" value="phenotype"/>
</dbReference>
<dbReference type="MIM" id="607837">
    <property type="type" value="gene"/>
</dbReference>
<dbReference type="MIM" id="610003">
    <property type="type" value="phenotype"/>
</dbReference>
<dbReference type="neXtProt" id="NX_Q9UBY8"/>
<dbReference type="OpenTargets" id="ENSG00000182372"/>
<dbReference type="Orphanet" id="228354">
    <property type="disease" value="CLN8 disease"/>
</dbReference>
<dbReference type="Orphanet" id="1947">
    <property type="disease" value="Progressive epilepsy-intellectual disability syndrome, Finnish type"/>
</dbReference>
<dbReference type="PharmGKB" id="PA26606"/>
<dbReference type="VEuPathDB" id="HostDB:ENSG00000182372"/>
<dbReference type="eggNOG" id="KOG4561">
    <property type="taxonomic scope" value="Eukaryota"/>
</dbReference>
<dbReference type="GeneTree" id="ENSGT01010000222313"/>
<dbReference type="HOGENOM" id="CLU_951678_0_0_1"/>
<dbReference type="InParanoid" id="Q9UBY8"/>
<dbReference type="OMA" id="FFRTFDL"/>
<dbReference type="OrthoDB" id="10052906at2759"/>
<dbReference type="PAN-GO" id="Q9UBY8">
    <property type="GO annotations" value="5 GO annotations based on evolutionary models"/>
</dbReference>
<dbReference type="PhylomeDB" id="Q9UBY8"/>
<dbReference type="TreeFam" id="TF331146"/>
<dbReference type="PathwayCommons" id="Q9UBY8"/>
<dbReference type="SignaLink" id="Q9UBY8"/>
<dbReference type="SIGNOR" id="Q9UBY8"/>
<dbReference type="BioGRID-ORCS" id="2055">
    <property type="hits" value="9 hits in 1156 CRISPR screens"/>
</dbReference>
<dbReference type="ChiTaRS" id="CLN8">
    <property type="organism name" value="human"/>
</dbReference>
<dbReference type="GeneWiki" id="CLN8"/>
<dbReference type="GenomeRNAi" id="2055"/>
<dbReference type="Pharos" id="Q9UBY8">
    <property type="development level" value="Tbio"/>
</dbReference>
<dbReference type="PRO" id="PR:Q9UBY8"/>
<dbReference type="Proteomes" id="UP000005640">
    <property type="component" value="Chromosome 8"/>
</dbReference>
<dbReference type="RNAct" id="Q9UBY8">
    <property type="molecule type" value="protein"/>
</dbReference>
<dbReference type="Bgee" id="ENSG00000182372">
    <property type="expression patterns" value="Expressed in corpus callosum and 104 other cell types or tissues"/>
</dbReference>
<dbReference type="ExpressionAtlas" id="Q9UBY8">
    <property type="expression patterns" value="baseline and differential"/>
</dbReference>
<dbReference type="GO" id="GO:0005783">
    <property type="term" value="C:endoplasmic reticulum"/>
    <property type="evidence" value="ECO:0000314"/>
    <property type="project" value="UniProtKB"/>
</dbReference>
<dbReference type="GO" id="GO:0005789">
    <property type="term" value="C:endoplasmic reticulum membrane"/>
    <property type="evidence" value="ECO:0007669"/>
    <property type="project" value="UniProtKB-SubCell"/>
</dbReference>
<dbReference type="GO" id="GO:0005793">
    <property type="term" value="C:endoplasmic reticulum-Golgi intermediate compartment"/>
    <property type="evidence" value="ECO:0000314"/>
    <property type="project" value="UniProtKB"/>
</dbReference>
<dbReference type="GO" id="GO:0033116">
    <property type="term" value="C:endoplasmic reticulum-Golgi intermediate compartment membrane"/>
    <property type="evidence" value="ECO:0007669"/>
    <property type="project" value="UniProtKB-SubCell"/>
</dbReference>
<dbReference type="GO" id="GO:0016020">
    <property type="term" value="C:membrane"/>
    <property type="evidence" value="ECO:0000303"/>
    <property type="project" value="UniProtKB"/>
</dbReference>
<dbReference type="GO" id="GO:0005739">
    <property type="term" value="C:mitochondrion"/>
    <property type="evidence" value="ECO:0007669"/>
    <property type="project" value="GOC"/>
</dbReference>
<dbReference type="GO" id="GO:0098793">
    <property type="term" value="C:presynapse"/>
    <property type="evidence" value="ECO:0007669"/>
    <property type="project" value="GOC"/>
</dbReference>
<dbReference type="GO" id="GO:0097001">
    <property type="term" value="F:ceramide binding"/>
    <property type="evidence" value="ECO:0000314"/>
    <property type="project" value="UniProtKB"/>
</dbReference>
<dbReference type="GO" id="GO:0007628">
    <property type="term" value="P:adult walking behavior"/>
    <property type="evidence" value="ECO:0007669"/>
    <property type="project" value="Ensembl"/>
</dbReference>
<dbReference type="GO" id="GO:0008306">
    <property type="term" value="P:associative learning"/>
    <property type="evidence" value="ECO:0007669"/>
    <property type="project" value="Ensembl"/>
</dbReference>
<dbReference type="GO" id="GO:0046513">
    <property type="term" value="P:ceramide biosynthetic process"/>
    <property type="evidence" value="ECO:0000303"/>
    <property type="project" value="UniProtKB"/>
</dbReference>
<dbReference type="GO" id="GO:0006672">
    <property type="term" value="P:ceramide metabolic process"/>
    <property type="evidence" value="ECO:0000315"/>
    <property type="project" value="UniProtKB"/>
</dbReference>
<dbReference type="GO" id="GO:0008203">
    <property type="term" value="P:cholesterol metabolic process"/>
    <property type="evidence" value="ECO:0000315"/>
    <property type="project" value="UniProtKB"/>
</dbReference>
<dbReference type="GO" id="GO:0051935">
    <property type="term" value="P:glutamate reuptake"/>
    <property type="evidence" value="ECO:0007669"/>
    <property type="project" value="Ensembl"/>
</dbReference>
<dbReference type="GO" id="GO:0008610">
    <property type="term" value="P:lipid biosynthetic process"/>
    <property type="evidence" value="ECO:0000303"/>
    <property type="project" value="UniProtKB"/>
</dbReference>
<dbReference type="GO" id="GO:0055088">
    <property type="term" value="P:lipid homeostasis"/>
    <property type="evidence" value="ECO:0000318"/>
    <property type="project" value="GO_Central"/>
</dbReference>
<dbReference type="GO" id="GO:0006869">
    <property type="term" value="P:lipid transport"/>
    <property type="evidence" value="ECO:0000303"/>
    <property type="project" value="UniProtKB"/>
</dbReference>
<dbReference type="GO" id="GO:0007040">
    <property type="term" value="P:lysosome organization"/>
    <property type="evidence" value="ECO:0007669"/>
    <property type="project" value="Ensembl"/>
</dbReference>
<dbReference type="GO" id="GO:0007006">
    <property type="term" value="P:mitochondrial membrane organization"/>
    <property type="evidence" value="ECO:0007669"/>
    <property type="project" value="Ensembl"/>
</dbReference>
<dbReference type="GO" id="GO:0050881">
    <property type="term" value="P:musculoskeletal movement"/>
    <property type="evidence" value="ECO:0007669"/>
    <property type="project" value="Ensembl"/>
</dbReference>
<dbReference type="GO" id="GO:0043524">
    <property type="term" value="P:negative regulation of neuron apoptotic process"/>
    <property type="evidence" value="ECO:0007669"/>
    <property type="project" value="Ensembl"/>
</dbReference>
<dbReference type="GO" id="GO:0045861">
    <property type="term" value="P:negative regulation of proteolysis"/>
    <property type="evidence" value="ECO:0000303"/>
    <property type="project" value="UniProtKB"/>
</dbReference>
<dbReference type="GO" id="GO:0007399">
    <property type="term" value="P:nervous system development"/>
    <property type="evidence" value="ECO:0000315"/>
    <property type="project" value="UniProtKB"/>
</dbReference>
<dbReference type="GO" id="GO:0060052">
    <property type="term" value="P:neurofilament cytoskeleton organization"/>
    <property type="evidence" value="ECO:0007669"/>
    <property type="project" value="Ensembl"/>
</dbReference>
<dbReference type="GO" id="GO:0050885">
    <property type="term" value="P:neuromuscular process controlling balance"/>
    <property type="evidence" value="ECO:0007669"/>
    <property type="project" value="Ensembl"/>
</dbReference>
<dbReference type="GO" id="GO:0050884">
    <property type="term" value="P:neuromuscular process controlling posture"/>
    <property type="evidence" value="ECO:0007669"/>
    <property type="project" value="Ensembl"/>
</dbReference>
<dbReference type="GO" id="GO:0006644">
    <property type="term" value="P:phospholipid metabolic process"/>
    <property type="evidence" value="ECO:0000315"/>
    <property type="project" value="UniProtKB"/>
</dbReference>
<dbReference type="GO" id="GO:0045494">
    <property type="term" value="P:photoreceptor cell maintenance"/>
    <property type="evidence" value="ECO:0007669"/>
    <property type="project" value="Ensembl"/>
</dbReference>
<dbReference type="GO" id="GO:0030163">
    <property type="term" value="P:protein catabolic process"/>
    <property type="evidence" value="ECO:0000303"/>
    <property type="project" value="UniProtKB"/>
</dbReference>
<dbReference type="GO" id="GO:0008361">
    <property type="term" value="P:regulation of cell size"/>
    <property type="evidence" value="ECO:0007669"/>
    <property type="project" value="Ensembl"/>
</dbReference>
<dbReference type="GO" id="GO:0060041">
    <property type="term" value="P:retina development in camera-type eye"/>
    <property type="evidence" value="ECO:0007669"/>
    <property type="project" value="Ensembl"/>
</dbReference>
<dbReference type="GO" id="GO:0097473">
    <property type="term" value="P:retinal rod cell apoptotic process"/>
    <property type="evidence" value="ECO:0007669"/>
    <property type="project" value="Ensembl"/>
</dbReference>
<dbReference type="GO" id="GO:0035176">
    <property type="term" value="P:social behavior"/>
    <property type="evidence" value="ECO:0007669"/>
    <property type="project" value="Ensembl"/>
</dbReference>
<dbReference type="GO" id="GO:0021523">
    <property type="term" value="P:somatic motor neuron differentiation"/>
    <property type="evidence" value="ECO:0007669"/>
    <property type="project" value="Ensembl"/>
</dbReference>
<dbReference type="GO" id="GO:0007601">
    <property type="term" value="P:visual perception"/>
    <property type="evidence" value="ECO:0007669"/>
    <property type="project" value="Ensembl"/>
</dbReference>
<dbReference type="InterPro" id="IPR006634">
    <property type="entry name" value="TLC-dom"/>
</dbReference>
<dbReference type="InterPro" id="IPR050846">
    <property type="entry name" value="TLCD"/>
</dbReference>
<dbReference type="PANTHER" id="PTHR13439">
    <property type="entry name" value="CT120 PROTEIN"/>
    <property type="match status" value="1"/>
</dbReference>
<dbReference type="PANTHER" id="PTHR13439:SF7">
    <property type="entry name" value="PROTEIN CLN8"/>
    <property type="match status" value="1"/>
</dbReference>
<dbReference type="Pfam" id="PF03798">
    <property type="entry name" value="TRAM_LAG1_CLN8"/>
    <property type="match status" value="1"/>
</dbReference>
<dbReference type="SMART" id="SM00724">
    <property type="entry name" value="TLC"/>
    <property type="match status" value="1"/>
</dbReference>
<dbReference type="PROSITE" id="PS50922">
    <property type="entry name" value="TLC"/>
    <property type="match status" value="1"/>
</dbReference>
<protein>
    <recommendedName>
        <fullName>Protein CLN8</fullName>
    </recommendedName>
</protein>
<name>CLN8_HUMAN</name>
<proteinExistence type="evidence at protein level"/>